<organism>
    <name type="scientific">Homo sapiens</name>
    <name type="common">Human</name>
    <dbReference type="NCBI Taxonomy" id="9606"/>
    <lineage>
        <taxon>Eukaryota</taxon>
        <taxon>Metazoa</taxon>
        <taxon>Chordata</taxon>
        <taxon>Craniata</taxon>
        <taxon>Vertebrata</taxon>
        <taxon>Euteleostomi</taxon>
        <taxon>Mammalia</taxon>
        <taxon>Eutheria</taxon>
        <taxon>Euarchontoglires</taxon>
        <taxon>Primates</taxon>
        <taxon>Haplorrhini</taxon>
        <taxon>Catarrhini</taxon>
        <taxon>Hominidae</taxon>
        <taxon>Homo</taxon>
    </lineage>
</organism>
<proteinExistence type="evidence at protein level"/>
<name>LIMK2_HUMAN</name>
<keyword id="KW-0002">3D-structure</keyword>
<keyword id="KW-0025">Alternative splicing</keyword>
<keyword id="KW-0067">ATP-binding</keyword>
<keyword id="KW-0963">Cytoplasm</keyword>
<keyword id="KW-0206">Cytoskeleton</keyword>
<keyword id="KW-0418">Kinase</keyword>
<keyword id="KW-0440">LIM domain</keyword>
<keyword id="KW-0479">Metal-binding</keyword>
<keyword id="KW-0547">Nucleotide-binding</keyword>
<keyword id="KW-0539">Nucleus</keyword>
<keyword id="KW-0597">Phosphoprotein</keyword>
<keyword id="KW-1267">Proteomics identification</keyword>
<keyword id="KW-1185">Reference proteome</keyword>
<keyword id="KW-0677">Repeat</keyword>
<keyword id="KW-0723">Serine/threonine-protein kinase</keyword>
<keyword id="KW-0808">Transferase</keyword>
<keyword id="KW-0862">Zinc</keyword>
<protein>
    <recommendedName>
        <fullName>LIM domain kinase 2</fullName>
        <shortName>LIMK-2</shortName>
        <ecNumber evidence="10 12">2.7.11.1</ecNumber>
    </recommendedName>
</protein>
<evidence type="ECO:0000250" key="1">
    <source>
        <dbReference type="UniProtKB" id="Q8BJ34"/>
    </source>
</evidence>
<evidence type="ECO:0000255" key="2">
    <source>
        <dbReference type="PROSITE-ProRule" id="PRU00125"/>
    </source>
</evidence>
<evidence type="ECO:0000255" key="3">
    <source>
        <dbReference type="PROSITE-ProRule" id="PRU00143"/>
    </source>
</evidence>
<evidence type="ECO:0000255" key="4">
    <source>
        <dbReference type="PROSITE-ProRule" id="PRU00159"/>
    </source>
</evidence>
<evidence type="ECO:0000256" key="5">
    <source>
        <dbReference type="SAM" id="MobiDB-lite"/>
    </source>
</evidence>
<evidence type="ECO:0000269" key="6">
    <source>
    </source>
</evidence>
<evidence type="ECO:0000269" key="7">
    <source>
    </source>
</evidence>
<evidence type="ECO:0000269" key="8">
    <source>
    </source>
</evidence>
<evidence type="ECO:0000269" key="9">
    <source>
    </source>
</evidence>
<evidence type="ECO:0000269" key="10">
    <source>
    </source>
</evidence>
<evidence type="ECO:0000269" key="11">
    <source>
    </source>
</evidence>
<evidence type="ECO:0000269" key="12">
    <source>
    </source>
</evidence>
<evidence type="ECO:0000269" key="13">
    <source>
    </source>
</evidence>
<evidence type="ECO:0000269" key="14">
    <source ref="9"/>
</evidence>
<evidence type="ECO:0000303" key="15">
    <source>
    </source>
</evidence>
<evidence type="ECO:0000303" key="16">
    <source>
    </source>
</evidence>
<evidence type="ECO:0000303" key="17">
    <source>
    </source>
</evidence>
<evidence type="ECO:0000305" key="18"/>
<evidence type="ECO:0007744" key="19">
    <source>
    </source>
</evidence>
<evidence type="ECO:0007744" key="20">
    <source>
    </source>
</evidence>
<evidence type="ECO:0007744" key="21">
    <source>
    </source>
</evidence>
<evidence type="ECO:0007829" key="22">
    <source>
        <dbReference type="PDB" id="1X6A"/>
    </source>
</evidence>
<evidence type="ECO:0007829" key="23">
    <source>
        <dbReference type="PDB" id="4TPT"/>
    </source>
</evidence>
<evidence type="ECO:0007829" key="24">
    <source>
        <dbReference type="PDB" id="7QHG"/>
    </source>
</evidence>
<evidence type="ECO:0007829" key="25">
    <source>
        <dbReference type="PDB" id="8GI4"/>
    </source>
</evidence>
<gene>
    <name type="primary">LIMK2</name>
</gene>
<feature type="chain" id="PRO_0000075809" description="LIM domain kinase 2">
    <location>
        <begin position="1"/>
        <end position="638"/>
    </location>
</feature>
<feature type="domain" description="LIM zinc-binding 1" evidence="2">
    <location>
        <begin position="12"/>
        <end position="63"/>
    </location>
</feature>
<feature type="domain" description="LIM zinc-binding 2" evidence="2">
    <location>
        <begin position="72"/>
        <end position="124"/>
    </location>
</feature>
<feature type="domain" description="PDZ" evidence="3">
    <location>
        <begin position="152"/>
        <end position="239"/>
    </location>
</feature>
<feature type="domain" description="Protein kinase" evidence="4">
    <location>
        <begin position="331"/>
        <end position="608"/>
    </location>
</feature>
<feature type="region of interest" description="Disordered" evidence="5">
    <location>
        <begin position="279"/>
        <end position="304"/>
    </location>
</feature>
<feature type="compositionally biased region" description="Low complexity" evidence="5">
    <location>
        <begin position="286"/>
        <end position="302"/>
    </location>
</feature>
<feature type="active site" evidence="10">
    <location>
        <position position="451"/>
    </location>
</feature>
<feature type="binding site" evidence="4">
    <location>
        <begin position="337"/>
        <end position="345"/>
    </location>
    <ligand>
        <name>ATP</name>
        <dbReference type="ChEBI" id="CHEBI:30616"/>
    </ligand>
</feature>
<feature type="binding site" evidence="4">
    <location>
        <position position="360"/>
    </location>
    <ligand>
        <name>ATP</name>
        <dbReference type="ChEBI" id="CHEBI:30616"/>
    </ligand>
</feature>
<feature type="modified residue" description="Phosphothreonine" evidence="20">
    <location>
        <position position="210"/>
    </location>
</feature>
<feature type="modified residue" description="Phosphoserine" evidence="19 20">
    <location>
        <position position="293"/>
    </location>
</feature>
<feature type="modified residue" description="Phosphoserine" evidence="19 21">
    <location>
        <position position="298"/>
    </location>
</feature>
<feature type="modified residue" description="Phosphothreonine; by ROCK1 and CDC42BP" evidence="7 8">
    <location>
        <position position="505"/>
    </location>
</feature>
<feature type="splice variant" id="VSP_012287" description="In isoform LIMK2b and isoform 3." evidence="15 16 17">
    <original>MSALAGEDVWRCPGCGDHIAPSQIWYRTVNETWHGSC</original>
    <variation>MGSYLSVPAYFTSRDL</variation>
    <location>
        <begin position="1"/>
        <end position="37"/>
    </location>
</feature>
<feature type="splice variant" id="VSP_043332" description="In isoform 3." evidence="16">
    <original>PAFSKLEDSFEALSLYLGELGIPLPAELEELDHTVSMQYGLTRDSPP</original>
    <variation>APPGAAGEGPGCADDEGPVRRQGKVTIKYDPKELRKHLNLEEWILEQLTRLYDCQEEEISELEIDVDELLDMESDDAWASRVKELLVDCYKPTEAFISGLLDKIRAMQKLSTPQKK</variation>
    <location>
        <begin position="592"/>
        <end position="638"/>
    </location>
</feature>
<feature type="sequence variant" id="VAR_034069" description="In dbSNP:rs5997917." evidence="9">
    <original>G</original>
    <variation>S</variation>
    <location>
        <position position="35"/>
    </location>
</feature>
<feature type="sequence variant" id="VAR_042249" description="In dbSNP:rs35923988." evidence="9">
    <original>D</original>
    <variation>N</variation>
    <location>
        <position position="45"/>
    </location>
</feature>
<feature type="sequence variant" id="VAR_042250" description="In dbSNP:rs34930775." evidence="9">
    <original>R</original>
    <variation>C</variation>
    <location>
        <position position="213"/>
    </location>
</feature>
<feature type="sequence variant" id="VAR_042251" description="In dbSNP:rs34875793." evidence="9">
    <original>P</original>
    <variation>R</variation>
    <location>
        <position position="296"/>
    </location>
</feature>
<feature type="sequence variant" id="VAR_050149" description="In dbSNP:rs2229874.">
    <original>R</original>
    <variation>H</variation>
    <location>
        <position position="381"/>
    </location>
</feature>
<feature type="sequence variant" id="VAR_042252" description="In dbSNP:rs35422808." evidence="9">
    <original>R</original>
    <variation>C</variation>
    <location>
        <position position="418"/>
    </location>
</feature>
<feature type="mutagenesis site" description="Abrogates kinase activity." evidence="10">
    <original>D</original>
    <variation>A</variation>
    <location>
        <position position="451"/>
    </location>
</feature>
<feature type="mutagenesis site" description="Phosphomimetic mutant; enhances kinase activity." evidence="7 10">
    <original>T</original>
    <variation>E</variation>
    <location>
        <position position="505"/>
    </location>
</feature>
<feature type="mutagenesis site" description="Abolishes cofilin phosphorylation and enhancement of stress fiber formation." evidence="7">
    <original>T</original>
    <variation>V</variation>
    <location>
        <position position="505"/>
    </location>
</feature>
<feature type="turn" evidence="22">
    <location>
        <begin position="73"/>
        <end position="75"/>
    </location>
</feature>
<feature type="turn" evidence="22">
    <location>
        <begin position="99"/>
        <end position="101"/>
    </location>
</feature>
<feature type="strand" evidence="22">
    <location>
        <begin position="111"/>
        <end position="113"/>
    </location>
</feature>
<feature type="strand" evidence="22">
    <location>
        <begin position="115"/>
        <end position="117"/>
    </location>
</feature>
<feature type="strand" evidence="22">
    <location>
        <begin position="119"/>
        <end position="121"/>
    </location>
</feature>
<feature type="helix" evidence="22">
    <location>
        <begin position="122"/>
        <end position="129"/>
    </location>
</feature>
<feature type="strand" evidence="25">
    <location>
        <begin position="150"/>
        <end position="155"/>
    </location>
</feature>
<feature type="strand" evidence="25">
    <location>
        <begin position="163"/>
        <end position="170"/>
    </location>
</feature>
<feature type="strand" evidence="25">
    <location>
        <begin position="178"/>
        <end position="185"/>
    </location>
</feature>
<feature type="helix" evidence="25">
    <location>
        <begin position="187"/>
        <end position="189"/>
    </location>
</feature>
<feature type="helix" evidence="25">
    <location>
        <begin position="192"/>
        <end position="194"/>
    </location>
</feature>
<feature type="strand" evidence="25">
    <location>
        <begin position="203"/>
        <end position="207"/>
    </location>
</feature>
<feature type="helix" evidence="25">
    <location>
        <begin position="212"/>
        <end position="214"/>
    </location>
</feature>
<feature type="helix" evidence="25">
    <location>
        <begin position="217"/>
        <end position="225"/>
    </location>
</feature>
<feature type="strand" evidence="25">
    <location>
        <begin position="231"/>
        <end position="236"/>
    </location>
</feature>
<feature type="strand" evidence="24">
    <location>
        <begin position="331"/>
        <end position="337"/>
    </location>
</feature>
<feature type="helix" evidence="24">
    <location>
        <begin position="341"/>
        <end position="343"/>
    </location>
</feature>
<feature type="strand" evidence="24">
    <location>
        <begin position="345"/>
        <end position="350"/>
    </location>
</feature>
<feature type="turn" evidence="24">
    <location>
        <begin position="351"/>
        <end position="353"/>
    </location>
</feature>
<feature type="strand" evidence="24">
    <location>
        <begin position="356"/>
        <end position="361"/>
    </location>
</feature>
<feature type="helix" evidence="24">
    <location>
        <begin position="367"/>
        <end position="375"/>
    </location>
</feature>
<feature type="helix" evidence="24">
    <location>
        <begin position="377"/>
        <end position="382"/>
    </location>
</feature>
<feature type="strand" evidence="24">
    <location>
        <begin position="391"/>
        <end position="397"/>
    </location>
</feature>
<feature type="strand" evidence="24">
    <location>
        <begin position="400"/>
        <end position="406"/>
    </location>
</feature>
<feature type="strand" evidence="24">
    <location>
        <begin position="410"/>
        <end position="412"/>
    </location>
</feature>
<feature type="helix" evidence="24">
    <location>
        <begin position="413"/>
        <end position="418"/>
    </location>
</feature>
<feature type="helix" evidence="24">
    <location>
        <begin position="425"/>
        <end position="444"/>
    </location>
</feature>
<feature type="strand" evidence="24">
    <location>
        <begin position="456"/>
        <end position="460"/>
    </location>
</feature>
<feature type="strand" evidence="24">
    <location>
        <begin position="465"/>
        <end position="467"/>
    </location>
</feature>
<feature type="strand" evidence="24">
    <location>
        <begin position="506"/>
        <end position="508"/>
    </location>
</feature>
<feature type="helix" evidence="24">
    <location>
        <begin position="510"/>
        <end position="512"/>
    </location>
</feature>
<feature type="helix" evidence="24">
    <location>
        <begin position="515"/>
        <end position="518"/>
    </location>
</feature>
<feature type="helix" evidence="24">
    <location>
        <begin position="527"/>
        <end position="541"/>
    </location>
</feature>
<feature type="helix" evidence="24">
    <location>
        <begin position="547"/>
        <end position="549"/>
    </location>
</feature>
<feature type="helix" evidence="24">
    <location>
        <begin position="560"/>
        <end position="567"/>
    </location>
</feature>
<feature type="helix" evidence="24">
    <location>
        <begin position="576"/>
        <end position="583"/>
    </location>
</feature>
<feature type="helix" evidence="24">
    <location>
        <begin position="588"/>
        <end position="590"/>
    </location>
</feature>
<feature type="helix" evidence="24">
    <location>
        <begin position="594"/>
        <end position="608"/>
    </location>
</feature>
<feature type="strand" evidence="23">
    <location>
        <begin position="609"/>
        <end position="611"/>
    </location>
</feature>
<feature type="helix" evidence="24">
    <location>
        <begin position="617"/>
        <end position="630"/>
    </location>
</feature>
<dbReference type="EC" id="2.7.11.1" evidence="10 12"/>
<dbReference type="EMBL" id="D45906">
    <property type="protein sequence ID" value="BAA08312.1"/>
    <property type="molecule type" value="mRNA"/>
</dbReference>
<dbReference type="EMBL" id="D85527">
    <property type="protein sequence ID" value="BAA12827.1"/>
    <property type="molecule type" value="mRNA"/>
</dbReference>
<dbReference type="EMBL" id="AL117466">
    <property type="protein sequence ID" value="CAB55941.1"/>
    <property type="molecule type" value="mRNA"/>
</dbReference>
<dbReference type="EMBL" id="CR456513">
    <property type="protein sequence ID" value="CAG30399.1"/>
    <property type="molecule type" value="mRNA"/>
</dbReference>
<dbReference type="EMBL" id="AK291640">
    <property type="protein sequence ID" value="BAF84329.1"/>
    <property type="molecule type" value="mRNA"/>
</dbReference>
<dbReference type="EMBL" id="AC002073">
    <property type="protein sequence ID" value="AAB54055.1"/>
    <property type="status" value="ALT_SEQ"/>
    <property type="molecule type" value="Genomic_DNA"/>
</dbReference>
<dbReference type="EMBL" id="AC002073">
    <property type="protein sequence ID" value="AAB54056.1"/>
    <property type="molecule type" value="Genomic_DNA"/>
</dbReference>
<dbReference type="EMBL" id="CH471095">
    <property type="protein sequence ID" value="EAW59954.1"/>
    <property type="molecule type" value="Genomic_DNA"/>
</dbReference>
<dbReference type="EMBL" id="CH471095">
    <property type="protein sequence ID" value="EAW59956.1"/>
    <property type="molecule type" value="Genomic_DNA"/>
</dbReference>
<dbReference type="EMBL" id="CH471095">
    <property type="protein sequence ID" value="EAW59958.1"/>
    <property type="molecule type" value="Genomic_DNA"/>
</dbReference>
<dbReference type="EMBL" id="BC013051">
    <property type="protein sequence ID" value="AAH13051.1"/>
    <property type="molecule type" value="mRNA"/>
</dbReference>
<dbReference type="CCDS" id="CCDS13891.1">
    <molecule id="P53671-1"/>
</dbReference>
<dbReference type="CCDS" id="CCDS13892.1">
    <molecule id="P53671-2"/>
</dbReference>
<dbReference type="CCDS" id="CCDS33637.1">
    <molecule id="P53671-3"/>
</dbReference>
<dbReference type="PIR" id="A59196">
    <property type="entry name" value="A59196"/>
</dbReference>
<dbReference type="RefSeq" id="NP_001026971.1">
    <molecule id="P53671-3"/>
    <property type="nucleotide sequence ID" value="NM_001031801.2"/>
</dbReference>
<dbReference type="RefSeq" id="NP_005560.1">
    <molecule id="P53671-1"/>
    <property type="nucleotide sequence ID" value="NM_005569.4"/>
</dbReference>
<dbReference type="RefSeq" id="NP_057952.1">
    <molecule id="P53671-2"/>
    <property type="nucleotide sequence ID" value="NM_016733.3"/>
</dbReference>
<dbReference type="PDB" id="1X6A">
    <property type="method" value="NMR"/>
    <property type="chains" value="A=62-129"/>
</dbReference>
<dbReference type="PDB" id="4TPT">
    <property type="method" value="X-ray"/>
    <property type="resolution" value="2.60 A"/>
    <property type="chains" value="A/B=330-632"/>
</dbReference>
<dbReference type="PDB" id="5NXD">
    <property type="method" value="X-ray"/>
    <property type="resolution" value="1.90 A"/>
    <property type="chains" value="A/B=330-632"/>
</dbReference>
<dbReference type="PDB" id="7QHG">
    <property type="method" value="X-ray"/>
    <property type="resolution" value="1.45 A"/>
    <property type="chains" value="A/B=330-632"/>
</dbReference>
<dbReference type="PDB" id="8GI4">
    <property type="method" value="X-ray"/>
    <property type="resolution" value="2.06 A"/>
    <property type="chains" value="A/B/C/D/E/F/G/H=130-250"/>
</dbReference>
<dbReference type="PDB" id="8S3X">
    <property type="method" value="X-ray"/>
    <property type="resolution" value="2.59 A"/>
    <property type="chains" value="A/B/C/D=330-632"/>
</dbReference>
<dbReference type="PDB" id="8WSW">
    <property type="method" value="X-ray"/>
    <property type="resolution" value="2.50 A"/>
    <property type="chains" value="A/B/C/D=330-632"/>
</dbReference>
<dbReference type="PDBsum" id="1X6A"/>
<dbReference type="PDBsum" id="4TPT"/>
<dbReference type="PDBsum" id="5NXD"/>
<dbReference type="PDBsum" id="7QHG"/>
<dbReference type="PDBsum" id="8GI4"/>
<dbReference type="PDBsum" id="8S3X"/>
<dbReference type="PDBsum" id="8WSW"/>
<dbReference type="SMR" id="P53671"/>
<dbReference type="BioGRID" id="110173">
    <property type="interactions" value="85"/>
</dbReference>
<dbReference type="FunCoup" id="P53671">
    <property type="interactions" value="2058"/>
</dbReference>
<dbReference type="IntAct" id="P53671">
    <property type="interactions" value="69"/>
</dbReference>
<dbReference type="MINT" id="P53671"/>
<dbReference type="STRING" id="9606.ENSP00000339916"/>
<dbReference type="BindingDB" id="P53671"/>
<dbReference type="ChEMBL" id="CHEMBL5932"/>
<dbReference type="DrugBank" id="DB11718">
    <property type="generic name" value="Encorafenib"/>
</dbReference>
<dbReference type="DrugBank" id="DB12010">
    <property type="generic name" value="Fostamatinib"/>
</dbReference>
<dbReference type="DrugCentral" id="P53671"/>
<dbReference type="GuidetoPHARMACOLOGY" id="2055"/>
<dbReference type="GlyCosmos" id="P53671">
    <property type="glycosylation" value="1 site, 1 glycan"/>
</dbReference>
<dbReference type="GlyGen" id="P53671">
    <property type="glycosylation" value="2 sites, 2 O-linked glycans (2 sites)"/>
</dbReference>
<dbReference type="iPTMnet" id="P53671"/>
<dbReference type="PhosphoSitePlus" id="P53671"/>
<dbReference type="BioMuta" id="LIMK2"/>
<dbReference type="DMDM" id="1708824"/>
<dbReference type="jPOST" id="P53671"/>
<dbReference type="MassIVE" id="P53671"/>
<dbReference type="PaxDb" id="9606-ENSP00000339916"/>
<dbReference type="PeptideAtlas" id="P53671"/>
<dbReference type="ProteomicsDB" id="56602">
    <molecule id="P53671-1"/>
</dbReference>
<dbReference type="ProteomicsDB" id="56603">
    <molecule id="P53671-2"/>
</dbReference>
<dbReference type="ProteomicsDB" id="56604">
    <molecule id="P53671-3"/>
</dbReference>
<dbReference type="Pumba" id="P53671"/>
<dbReference type="Antibodypedia" id="2106">
    <property type="antibodies" value="595 antibodies from 38 providers"/>
</dbReference>
<dbReference type="DNASU" id="3985"/>
<dbReference type="Ensembl" id="ENST00000331728.9">
    <molecule id="P53671-1"/>
    <property type="protein sequence ID" value="ENSP00000332687.4"/>
    <property type="gene ID" value="ENSG00000182541.18"/>
</dbReference>
<dbReference type="Ensembl" id="ENST00000333611.8">
    <molecule id="P53671-2"/>
    <property type="protein sequence ID" value="ENSP00000330470.4"/>
    <property type="gene ID" value="ENSG00000182541.18"/>
</dbReference>
<dbReference type="Ensembl" id="ENST00000340552.4">
    <molecule id="P53671-3"/>
    <property type="protein sequence ID" value="ENSP00000339916.4"/>
    <property type="gene ID" value="ENSG00000182541.18"/>
</dbReference>
<dbReference type="GeneID" id="3985"/>
<dbReference type="KEGG" id="hsa:3985"/>
<dbReference type="MANE-Select" id="ENST00000331728.9">
    <property type="protein sequence ID" value="ENSP00000332687.4"/>
    <property type="RefSeq nucleotide sequence ID" value="NM_005569.4"/>
    <property type="RefSeq protein sequence ID" value="NP_005560.1"/>
</dbReference>
<dbReference type="UCSC" id="uc003akh.4">
    <molecule id="P53671-1"/>
    <property type="organism name" value="human"/>
</dbReference>
<dbReference type="AGR" id="HGNC:6614"/>
<dbReference type="CTD" id="3985"/>
<dbReference type="DisGeNET" id="3985"/>
<dbReference type="GeneCards" id="LIMK2"/>
<dbReference type="HGNC" id="HGNC:6614">
    <property type="gene designation" value="LIMK2"/>
</dbReference>
<dbReference type="HPA" id="ENSG00000182541">
    <property type="expression patterns" value="Low tissue specificity"/>
</dbReference>
<dbReference type="MIM" id="601988">
    <property type="type" value="gene"/>
</dbReference>
<dbReference type="neXtProt" id="NX_P53671"/>
<dbReference type="OpenTargets" id="ENSG00000182541"/>
<dbReference type="PharmGKB" id="PA30387"/>
<dbReference type="VEuPathDB" id="HostDB:ENSG00000182541"/>
<dbReference type="eggNOG" id="KOG1187">
    <property type="taxonomic scope" value="Eukaryota"/>
</dbReference>
<dbReference type="GeneTree" id="ENSGT00940000159133"/>
<dbReference type="HOGENOM" id="CLU_000288_7_23_1"/>
<dbReference type="InParanoid" id="P53671"/>
<dbReference type="OMA" id="EPENNCY"/>
<dbReference type="OrthoDB" id="20134at2759"/>
<dbReference type="PAN-GO" id="P53671">
    <property type="GO annotations" value="4 GO annotations based on evolutionary models"/>
</dbReference>
<dbReference type="PhylomeDB" id="P53671"/>
<dbReference type="TreeFam" id="TF318014"/>
<dbReference type="BRENDA" id="2.7.10.2">
    <property type="organism ID" value="2681"/>
</dbReference>
<dbReference type="PathwayCommons" id="P53671"/>
<dbReference type="Reactome" id="R-HSA-3928662">
    <property type="pathway name" value="EPHB-mediated forward signaling"/>
</dbReference>
<dbReference type="Reactome" id="R-HSA-416572">
    <property type="pathway name" value="Sema4D induced cell migration and growth-cone collapse"/>
</dbReference>
<dbReference type="Reactome" id="R-HSA-5627117">
    <property type="pathway name" value="RHO GTPases Activate ROCKs"/>
</dbReference>
<dbReference type="SignaLink" id="P53671"/>
<dbReference type="SIGNOR" id="P53671"/>
<dbReference type="BioGRID-ORCS" id="3985">
    <property type="hits" value="15 hits in 1192 CRISPR screens"/>
</dbReference>
<dbReference type="CD-CODE" id="8C2F96ED">
    <property type="entry name" value="Centrosome"/>
</dbReference>
<dbReference type="ChiTaRS" id="LIMK2">
    <property type="organism name" value="human"/>
</dbReference>
<dbReference type="EvolutionaryTrace" id="P53671"/>
<dbReference type="GeneWiki" id="LIMK2"/>
<dbReference type="GenomeRNAi" id="3985"/>
<dbReference type="Pharos" id="P53671">
    <property type="development level" value="Tchem"/>
</dbReference>
<dbReference type="PRO" id="PR:P53671"/>
<dbReference type="Proteomes" id="UP000005640">
    <property type="component" value="Chromosome 22"/>
</dbReference>
<dbReference type="RNAct" id="P53671">
    <property type="molecule type" value="protein"/>
</dbReference>
<dbReference type="Bgee" id="ENSG00000182541">
    <property type="expression patterns" value="Expressed in cervix squamous epithelium and 192 other cell types or tissues"/>
</dbReference>
<dbReference type="ExpressionAtlas" id="P53671">
    <property type="expression patterns" value="baseline and differential"/>
</dbReference>
<dbReference type="GO" id="GO:0005813">
    <property type="term" value="C:centrosome"/>
    <property type="evidence" value="ECO:0000314"/>
    <property type="project" value="UniProtKB"/>
</dbReference>
<dbReference type="GO" id="GO:0005801">
    <property type="term" value="C:cis-Golgi network"/>
    <property type="evidence" value="ECO:0007669"/>
    <property type="project" value="Ensembl"/>
</dbReference>
<dbReference type="GO" id="GO:0005737">
    <property type="term" value="C:cytoplasm"/>
    <property type="evidence" value="ECO:0000318"/>
    <property type="project" value="GO_Central"/>
</dbReference>
<dbReference type="GO" id="GO:0072686">
    <property type="term" value="C:mitotic spindle"/>
    <property type="evidence" value="ECO:0000314"/>
    <property type="project" value="UniProtKB"/>
</dbReference>
<dbReference type="GO" id="GO:0005634">
    <property type="term" value="C:nucleus"/>
    <property type="evidence" value="ECO:0000318"/>
    <property type="project" value="GO_Central"/>
</dbReference>
<dbReference type="GO" id="GO:0048471">
    <property type="term" value="C:perinuclear region of cytoplasm"/>
    <property type="evidence" value="ECO:0007669"/>
    <property type="project" value="UniProtKB-SubCell"/>
</dbReference>
<dbReference type="GO" id="GO:0005524">
    <property type="term" value="F:ATP binding"/>
    <property type="evidence" value="ECO:0007669"/>
    <property type="project" value="UniProtKB-KW"/>
</dbReference>
<dbReference type="GO" id="GO:0046872">
    <property type="term" value="F:metal ion binding"/>
    <property type="evidence" value="ECO:0007669"/>
    <property type="project" value="UniProtKB-KW"/>
</dbReference>
<dbReference type="GO" id="GO:0106310">
    <property type="term" value="F:protein serine kinase activity"/>
    <property type="evidence" value="ECO:0007669"/>
    <property type="project" value="RHEA"/>
</dbReference>
<dbReference type="GO" id="GO:0004674">
    <property type="term" value="F:protein serine/threonine kinase activity"/>
    <property type="evidence" value="ECO:0000314"/>
    <property type="project" value="UniProtKB"/>
</dbReference>
<dbReference type="GO" id="GO:0030036">
    <property type="term" value="P:actin cytoskeleton organization"/>
    <property type="evidence" value="ECO:0000318"/>
    <property type="project" value="GO_Central"/>
</dbReference>
<dbReference type="GO" id="GO:0030953">
    <property type="term" value="P:astral microtubule organization"/>
    <property type="evidence" value="ECO:0000314"/>
    <property type="project" value="UniProtKB"/>
</dbReference>
<dbReference type="GO" id="GO:0061303">
    <property type="term" value="P:cornea development in camera-type eye"/>
    <property type="evidence" value="ECO:0007669"/>
    <property type="project" value="Ensembl"/>
</dbReference>
<dbReference type="GO" id="GO:0051650">
    <property type="term" value="P:establishment of vesicle localization"/>
    <property type="evidence" value="ECO:0000315"/>
    <property type="project" value="UniProtKB"/>
</dbReference>
<dbReference type="GO" id="GO:0060322">
    <property type="term" value="P:head development"/>
    <property type="evidence" value="ECO:0007669"/>
    <property type="project" value="Ensembl"/>
</dbReference>
<dbReference type="GO" id="GO:1902018">
    <property type="term" value="P:negative regulation of cilium assembly"/>
    <property type="evidence" value="ECO:0000315"/>
    <property type="project" value="UniProtKB"/>
</dbReference>
<dbReference type="GO" id="GO:1900182">
    <property type="term" value="P:positive regulation of protein localization to nucleus"/>
    <property type="evidence" value="ECO:0000315"/>
    <property type="project" value="UniProtKB"/>
</dbReference>
<dbReference type="GO" id="GO:0006468">
    <property type="term" value="P:protein phosphorylation"/>
    <property type="evidence" value="ECO:0000314"/>
    <property type="project" value="UniProtKB"/>
</dbReference>
<dbReference type="GO" id="GO:0007283">
    <property type="term" value="P:spermatogenesis"/>
    <property type="evidence" value="ECO:0007669"/>
    <property type="project" value="Ensembl"/>
</dbReference>
<dbReference type="CDD" id="cd09463">
    <property type="entry name" value="LIM1_LIMK2"/>
    <property type="match status" value="1"/>
</dbReference>
<dbReference type="CDD" id="cd09465">
    <property type="entry name" value="LIM2_LIMK2"/>
    <property type="match status" value="1"/>
</dbReference>
<dbReference type="CDD" id="cd06754">
    <property type="entry name" value="PDZ_LIMK-like"/>
    <property type="match status" value="1"/>
</dbReference>
<dbReference type="CDD" id="cd14222">
    <property type="entry name" value="STKc_LIMK2"/>
    <property type="match status" value="1"/>
</dbReference>
<dbReference type="FunFam" id="2.10.110.10:FF:000038">
    <property type="entry name" value="LIM domain kinase 2"/>
    <property type="match status" value="1"/>
</dbReference>
<dbReference type="FunFam" id="2.10.110.10:FF:000090">
    <property type="entry name" value="LIM domain kinase 2"/>
    <property type="match status" value="1"/>
</dbReference>
<dbReference type="FunFam" id="3.30.200.20:FF:000038">
    <property type="entry name" value="LIM domain kinase 2"/>
    <property type="match status" value="1"/>
</dbReference>
<dbReference type="FunFam" id="1.10.510.10:FF:000197">
    <property type="entry name" value="LIM domain kinase 2 isoform X1"/>
    <property type="match status" value="1"/>
</dbReference>
<dbReference type="FunFam" id="2.30.42.10:FF:000082">
    <property type="entry name" value="LIM domain kinase 2 isoform X2"/>
    <property type="match status" value="1"/>
</dbReference>
<dbReference type="Gene3D" id="2.30.42.10">
    <property type="match status" value="1"/>
</dbReference>
<dbReference type="Gene3D" id="2.10.110.10">
    <property type="entry name" value="Cysteine Rich Protein"/>
    <property type="match status" value="2"/>
</dbReference>
<dbReference type="Gene3D" id="3.30.200.20">
    <property type="entry name" value="Phosphorylase Kinase, domain 1"/>
    <property type="match status" value="1"/>
</dbReference>
<dbReference type="Gene3D" id="1.10.510.10">
    <property type="entry name" value="Transferase(Phosphotransferase) domain 1"/>
    <property type="match status" value="1"/>
</dbReference>
<dbReference type="InterPro" id="IPR050940">
    <property type="entry name" value="Actin_reg-Ser/Thr_kinase"/>
</dbReference>
<dbReference type="InterPro" id="IPR011009">
    <property type="entry name" value="Kinase-like_dom_sf"/>
</dbReference>
<dbReference type="InterPro" id="IPR001478">
    <property type="entry name" value="PDZ"/>
</dbReference>
<dbReference type="InterPro" id="IPR036034">
    <property type="entry name" value="PDZ_sf"/>
</dbReference>
<dbReference type="InterPro" id="IPR000719">
    <property type="entry name" value="Prot_kinase_dom"/>
</dbReference>
<dbReference type="InterPro" id="IPR017441">
    <property type="entry name" value="Protein_kinase_ATP_BS"/>
</dbReference>
<dbReference type="InterPro" id="IPR001245">
    <property type="entry name" value="Ser-Thr/Tyr_kinase_cat_dom"/>
</dbReference>
<dbReference type="InterPro" id="IPR001781">
    <property type="entry name" value="Znf_LIM"/>
</dbReference>
<dbReference type="PANTHER" id="PTHR46485">
    <property type="entry name" value="LIM DOMAIN KINASE 1"/>
    <property type="match status" value="1"/>
</dbReference>
<dbReference type="PANTHER" id="PTHR46485:SF1">
    <property type="entry name" value="LIM DOMAIN KINASE 2"/>
    <property type="match status" value="1"/>
</dbReference>
<dbReference type="Pfam" id="PF00412">
    <property type="entry name" value="LIM"/>
    <property type="match status" value="2"/>
</dbReference>
<dbReference type="Pfam" id="PF00595">
    <property type="entry name" value="PDZ"/>
    <property type="match status" value="1"/>
</dbReference>
<dbReference type="Pfam" id="PF07714">
    <property type="entry name" value="PK_Tyr_Ser-Thr"/>
    <property type="match status" value="1"/>
</dbReference>
<dbReference type="SMART" id="SM00132">
    <property type="entry name" value="LIM"/>
    <property type="match status" value="2"/>
</dbReference>
<dbReference type="SMART" id="SM00228">
    <property type="entry name" value="PDZ"/>
    <property type="match status" value="1"/>
</dbReference>
<dbReference type="SUPFAM" id="SSF57716">
    <property type="entry name" value="Glucocorticoid receptor-like (DNA-binding domain)"/>
    <property type="match status" value="2"/>
</dbReference>
<dbReference type="SUPFAM" id="SSF50156">
    <property type="entry name" value="PDZ domain-like"/>
    <property type="match status" value="1"/>
</dbReference>
<dbReference type="SUPFAM" id="SSF56112">
    <property type="entry name" value="Protein kinase-like (PK-like)"/>
    <property type="match status" value="1"/>
</dbReference>
<dbReference type="PROSITE" id="PS00478">
    <property type="entry name" value="LIM_DOMAIN_1"/>
    <property type="match status" value="2"/>
</dbReference>
<dbReference type="PROSITE" id="PS50023">
    <property type="entry name" value="LIM_DOMAIN_2"/>
    <property type="match status" value="2"/>
</dbReference>
<dbReference type="PROSITE" id="PS50106">
    <property type="entry name" value="PDZ"/>
    <property type="match status" value="1"/>
</dbReference>
<dbReference type="PROSITE" id="PS00107">
    <property type="entry name" value="PROTEIN_KINASE_ATP"/>
    <property type="match status" value="1"/>
</dbReference>
<dbReference type="PROSITE" id="PS50011">
    <property type="entry name" value="PROTEIN_KINASE_DOM"/>
    <property type="match status" value="1"/>
</dbReference>
<sequence>MSALAGEDVWRCPGCGDHIAPSQIWYRTVNETWHGSCFRCSECQDSLTNWYYEKDGKLYCPKDYWGKFGEFCHGCSLLMTGPFMVAGEFKYHPECFACMSCKVIIEDGDAYALVQHATLYCGKCHNEVVLAPMFERLSTESVQEQLPYSVTLISMPATTEGRRGFSVSVESACSNYATTVQVKEVNRMHISPNNRNAIHPGDRILEINGTPVRTLRVEEVEDAISQTSQTLQLLIEHDPVSQRLDQLRLEARLAPHMQNAGHPHALSTLDTKENLEGTLRRRSLRRSNSISKSPGPSSPKEPLLFSRDISRSESLRCSSSYSQQIFRPCDLIHGEVLGKGFFGQAIKVTHKATGKVMVMKELIRCDEETQKTFLTEVKVMRSLDHPNVLKFIGVLYKDKKLNLLTEYIEGGTLKDFLRSMDPFPWQQKVRFAKGIASGMAYLHSMCIIHRDLNSHNCLIKLDKTVVVADFGLSRLIVEERKRAPMEKATTKKRTLRKNDRKKRYTVVGNPYWMAPEMLNGKSYDETVDIFSFGIVLCEIIGQVYADPDCLPRTLDFGLNVKLFWEKFVPTDCPPAFFPLAAICCRLEPESRPAFSKLEDSFEALSLYLGELGIPLPAELEELDHTVSMQYGLTRDSPP</sequence>
<comment type="function">
    <text evidence="6 7 10 11 12">Serine/threonine-protein kinase that plays an essential role in the regulation of actin filament dynamics (PubMed:10436159, PubMed:11018042). Acts downstream of several Rho family GTPase signal transduction pathways (PubMed:10436159, PubMed:11018042). Involved in astral microtubule organization and mitotic spindle orientation during early stages of mitosis by mediating phosphorylation of TPPP (PubMed:22328514). Displays serine/threonine-specific phosphorylation of myelin basic protein and histone (MBP) in vitro (PubMed:8537403). Suppresses ciliogenesis via multiple pathways; phosphorylation of CFL1, suppression of directional trafficking of ciliary vesicles to the ciliary base, and by facilitating YAP1 nuclear localization where it acts as a transcriptional corepressor of the TEAD4 target genes AURKA and PLK1 (PubMed:25849865).</text>
</comment>
<comment type="catalytic activity">
    <reaction evidence="10 12">
        <text>L-seryl-[protein] + ATP = O-phospho-L-seryl-[protein] + ADP + H(+)</text>
        <dbReference type="Rhea" id="RHEA:17989"/>
        <dbReference type="Rhea" id="RHEA-COMP:9863"/>
        <dbReference type="Rhea" id="RHEA-COMP:11604"/>
        <dbReference type="ChEBI" id="CHEBI:15378"/>
        <dbReference type="ChEBI" id="CHEBI:29999"/>
        <dbReference type="ChEBI" id="CHEBI:30616"/>
        <dbReference type="ChEBI" id="CHEBI:83421"/>
        <dbReference type="ChEBI" id="CHEBI:456216"/>
        <dbReference type="EC" id="2.7.11.1"/>
    </reaction>
    <physiologicalReaction direction="left-to-right" evidence="10">
        <dbReference type="Rhea" id="RHEA:17990"/>
    </physiologicalReaction>
</comment>
<comment type="catalytic activity">
    <reaction evidence="10 12">
        <text>L-threonyl-[protein] + ATP = O-phospho-L-threonyl-[protein] + ADP + H(+)</text>
        <dbReference type="Rhea" id="RHEA:46608"/>
        <dbReference type="Rhea" id="RHEA-COMP:11060"/>
        <dbReference type="Rhea" id="RHEA-COMP:11605"/>
        <dbReference type="ChEBI" id="CHEBI:15378"/>
        <dbReference type="ChEBI" id="CHEBI:30013"/>
        <dbReference type="ChEBI" id="CHEBI:30616"/>
        <dbReference type="ChEBI" id="CHEBI:61977"/>
        <dbReference type="ChEBI" id="CHEBI:456216"/>
        <dbReference type="EC" id="2.7.11.1"/>
    </reaction>
    <physiologicalReaction direction="left-to-right" evidence="10">
        <dbReference type="Rhea" id="RHEA:46609"/>
    </physiologicalReaction>
</comment>
<comment type="subunit">
    <molecule>Isoform LIMK2a</molecule>
    <text evidence="13">Interacts with LIMK2b.</text>
</comment>
<comment type="subunit">
    <molecule>Isoform LIMK2b</molecule>
    <text evidence="13">Interacts with LIMK2a.</text>
</comment>
<comment type="subunit">
    <text evidence="1 6 7 14">Binds ROCK1 and MARF1 (PubMed:10436159, PubMed:11018042, Ref.9). Interacts with NISCH (By similarity).</text>
</comment>
<comment type="interaction">
    <interactant intactId="EBI-1384350">
        <id>P53671</id>
    </interactant>
    <interactant intactId="EBI-295634">
        <id>Q16543</id>
        <label>CDC37</label>
    </interactant>
    <organismsDiffer>false</organismsDiffer>
    <experiments>3</experiments>
</comment>
<comment type="interaction">
    <interactant intactId="EBI-1384350">
        <id>P53671</id>
    </interactant>
    <interactant intactId="EBI-352572">
        <id>P08238</id>
        <label>HSP90AB1</label>
    </interactant>
    <organismsDiffer>false</organismsDiffer>
    <experiments>3</experiments>
</comment>
<comment type="interaction">
    <interactant intactId="EBI-1384350">
        <id>P53671</id>
    </interactant>
    <interactant intactId="EBI-7009703">
        <id>Q96C90</id>
        <label>PPP1R14B</label>
    </interactant>
    <organismsDiffer>false</organismsDiffer>
    <experiments>2</experiments>
</comment>
<comment type="interaction">
    <interactant intactId="EBI-1384350">
        <id>P53671</id>
    </interactant>
    <interactant intactId="EBI-356498">
        <id>P62258</id>
        <label>YWHAE</label>
    </interactant>
    <organismsDiffer>false</organismsDiffer>
    <experiments>2</experiments>
</comment>
<comment type="subcellular location">
    <subcellularLocation>
        <location evidence="10">Cytoplasm</location>
        <location evidence="10">Cytoskeleton</location>
        <location evidence="10">Spindle</location>
    </subcellularLocation>
    <subcellularLocation>
        <location evidence="11">Cytoplasm</location>
        <location evidence="11">Cytoskeleton</location>
        <location evidence="11">Microtubule organizing center</location>
        <location evidence="11">Centrosome</location>
    </subcellularLocation>
</comment>
<comment type="subcellular location">
    <molecule>Isoform LIMK2a</molecule>
    <subcellularLocation>
        <location evidence="13">Cytoplasm</location>
    </subcellularLocation>
    <subcellularLocation>
        <location evidence="13">Nucleus</location>
    </subcellularLocation>
</comment>
<comment type="subcellular location">
    <molecule>Isoform LIMK2b</molecule>
    <subcellularLocation>
        <location evidence="13">Cytoplasm</location>
    </subcellularLocation>
    <subcellularLocation>
        <location evidence="13">Cytoplasm</location>
        <location evidence="13">Perinuclear region</location>
    </subcellularLocation>
    <subcellularLocation>
        <location evidence="13">Nucleus</location>
    </subcellularLocation>
    <text evidence="13">Mainly present in the cytoplasm and is scarcely translocated to the nucleus.</text>
</comment>
<comment type="alternative products">
    <event type="alternative splicing"/>
    <isoform>
        <id>P53671-1</id>
        <name evidence="17">LIMK2a</name>
        <sequence type="displayed"/>
    </isoform>
    <isoform>
        <id>P53671-2</id>
        <name evidence="17">LIMK2b</name>
        <sequence type="described" ref="VSP_012287"/>
    </isoform>
    <isoform>
        <id>P53671-3</id>
        <name>3</name>
        <sequence type="described" ref="VSP_012287 VSP_043332"/>
    </isoform>
</comment>
<comment type="PTM">
    <text evidence="7 8">Phosphorylated on serine and/or threonine residues by ROCK1.</text>
</comment>
<comment type="similarity">
    <text evidence="18">Belongs to the protein kinase superfamily. TKL Ser/Thr protein kinase family.</text>
</comment>
<comment type="sequence caution" evidence="18">
    <conflict type="erroneous gene model prediction">
        <sequence resource="EMBL-CDS" id="AAB54055"/>
    </conflict>
</comment>
<accession>P53671</accession>
<accession>A8K6H5</accession>
<accession>Q7KZ80</accession>
<accession>Q7L3H5</accession>
<accession>Q96E10</accession>
<accession>Q99464</accession>
<accession>Q9UFU0</accession>
<reference key="1">
    <citation type="journal article" date="1995" name="J. Biol. Chem.">
        <title>Identification and characterization of a novel family of serine/threonine kinases containing two N-terminal LIM motifs.</title>
        <authorList>
            <person name="Okano I."/>
            <person name="Hiraoka J."/>
            <person name="Otera H."/>
            <person name="Nunoue K."/>
            <person name="Ohashi K."/>
            <person name="Iwashita S."/>
            <person name="Hirai M."/>
            <person name="Mizuno K."/>
        </authorList>
    </citation>
    <scope>NUCLEOTIDE SEQUENCE [MRNA] (ISOFORM LIMK2A)</scope>
    <scope>FUNCTION</scope>
    <scope>CATALYTIC ACTIVITY</scope>
    <source>
        <tissue>Hepatoma</tissue>
    </source>
</reference>
<reference key="2">
    <citation type="journal article" date="1996" name="Biochem. Biophys. Res. Commun.">
        <title>Subcellular localization and protein interaction of the human LIMK2 gene expressing alternative transcripts with tissue-specific regulation.</title>
        <authorList>
            <person name="Osada H."/>
            <person name="Hasada K."/>
            <person name="Inazawa J."/>
            <person name="Uchida K."/>
            <person name="Ueda R."/>
            <person name="Takahashi T."/>
            <person name="Takahashi T."/>
        </authorList>
    </citation>
    <scope>NUCLEOTIDE SEQUENCE [MRNA] (ISOFORMS LIMK2A AND LIMK2B)</scope>
    <scope>SELF-INTERACTION</scope>
    <scope>SUBCELLULAR LOCATION</scope>
    <scope>TISSUE SPECIFICITY</scope>
    <source>
        <tissue>Lung</tissue>
    </source>
</reference>
<reference key="3">
    <citation type="journal article" date="2001" name="Genome Res.">
        <title>Towards a catalog of human genes and proteins: sequencing and analysis of 500 novel complete protein coding human cDNAs.</title>
        <authorList>
            <person name="Wiemann S."/>
            <person name="Weil B."/>
            <person name="Wellenreuther R."/>
            <person name="Gassenhuber J."/>
            <person name="Glassl S."/>
            <person name="Ansorge W."/>
            <person name="Boecher M."/>
            <person name="Bloecker H."/>
            <person name="Bauersachs S."/>
            <person name="Blum H."/>
            <person name="Lauber J."/>
            <person name="Duesterhoeft A."/>
            <person name="Beyer A."/>
            <person name="Koehrer K."/>
            <person name="Strack N."/>
            <person name="Mewes H.-W."/>
            <person name="Ottenwaelder B."/>
            <person name="Obermaier B."/>
            <person name="Tampe J."/>
            <person name="Heubner D."/>
            <person name="Wambutt R."/>
            <person name="Korn B."/>
            <person name="Klein M."/>
            <person name="Poustka A."/>
        </authorList>
    </citation>
    <scope>NUCLEOTIDE SEQUENCE [LARGE SCALE MRNA] (ISOFORM LIMK2B)</scope>
    <source>
        <tissue>Uterus</tissue>
    </source>
</reference>
<reference key="4">
    <citation type="journal article" date="2004" name="Genome Biol.">
        <title>A genome annotation-driven approach to cloning the human ORFeome.</title>
        <authorList>
            <person name="Collins J.E."/>
            <person name="Wright C.L."/>
            <person name="Edwards C.A."/>
            <person name="Davis M.P."/>
            <person name="Grinham J.A."/>
            <person name="Cole C.G."/>
            <person name="Goward M.E."/>
            <person name="Aguado B."/>
            <person name="Mallya M."/>
            <person name="Mokrab Y."/>
            <person name="Huckle E.J."/>
            <person name="Beare D.M."/>
            <person name="Dunham I."/>
        </authorList>
    </citation>
    <scope>NUCLEOTIDE SEQUENCE [LARGE SCALE MRNA] (ISOFORM LIMK2A)</scope>
</reference>
<reference key="5">
    <citation type="journal article" date="2004" name="Nat. Genet.">
        <title>Complete sequencing and characterization of 21,243 full-length human cDNAs.</title>
        <authorList>
            <person name="Ota T."/>
            <person name="Suzuki Y."/>
            <person name="Nishikawa T."/>
            <person name="Otsuki T."/>
            <person name="Sugiyama T."/>
            <person name="Irie R."/>
            <person name="Wakamatsu A."/>
            <person name="Hayashi K."/>
            <person name="Sato H."/>
            <person name="Nagai K."/>
            <person name="Kimura K."/>
            <person name="Makita H."/>
            <person name="Sekine M."/>
            <person name="Obayashi M."/>
            <person name="Nishi T."/>
            <person name="Shibahara T."/>
            <person name="Tanaka T."/>
            <person name="Ishii S."/>
            <person name="Yamamoto J."/>
            <person name="Saito K."/>
            <person name="Kawai Y."/>
            <person name="Isono Y."/>
            <person name="Nakamura Y."/>
            <person name="Nagahari K."/>
            <person name="Murakami K."/>
            <person name="Yasuda T."/>
            <person name="Iwayanagi T."/>
            <person name="Wagatsuma M."/>
            <person name="Shiratori A."/>
            <person name="Sudo H."/>
            <person name="Hosoiri T."/>
            <person name="Kaku Y."/>
            <person name="Kodaira H."/>
            <person name="Kondo H."/>
            <person name="Sugawara M."/>
            <person name="Takahashi M."/>
            <person name="Kanda K."/>
            <person name="Yokoi T."/>
            <person name="Furuya T."/>
            <person name="Kikkawa E."/>
            <person name="Omura Y."/>
            <person name="Abe K."/>
            <person name="Kamihara K."/>
            <person name="Katsuta N."/>
            <person name="Sato K."/>
            <person name="Tanikawa M."/>
            <person name="Yamazaki M."/>
            <person name="Ninomiya K."/>
            <person name="Ishibashi T."/>
            <person name="Yamashita H."/>
            <person name="Murakawa K."/>
            <person name="Fujimori K."/>
            <person name="Tanai H."/>
            <person name="Kimata M."/>
            <person name="Watanabe M."/>
            <person name="Hiraoka S."/>
            <person name="Chiba Y."/>
            <person name="Ishida S."/>
            <person name="Ono Y."/>
            <person name="Takiguchi S."/>
            <person name="Watanabe S."/>
            <person name="Yosida M."/>
            <person name="Hotuta T."/>
            <person name="Kusano J."/>
            <person name="Kanehori K."/>
            <person name="Takahashi-Fujii A."/>
            <person name="Hara H."/>
            <person name="Tanase T.-O."/>
            <person name="Nomura Y."/>
            <person name="Togiya S."/>
            <person name="Komai F."/>
            <person name="Hara R."/>
            <person name="Takeuchi K."/>
            <person name="Arita M."/>
            <person name="Imose N."/>
            <person name="Musashino K."/>
            <person name="Yuuki H."/>
            <person name="Oshima A."/>
            <person name="Sasaki N."/>
            <person name="Aotsuka S."/>
            <person name="Yoshikawa Y."/>
            <person name="Matsunawa H."/>
            <person name="Ichihara T."/>
            <person name="Shiohata N."/>
            <person name="Sano S."/>
            <person name="Moriya S."/>
            <person name="Momiyama H."/>
            <person name="Satoh N."/>
            <person name="Takami S."/>
            <person name="Terashima Y."/>
            <person name="Suzuki O."/>
            <person name="Nakagawa S."/>
            <person name="Senoh A."/>
            <person name="Mizoguchi H."/>
            <person name="Goto Y."/>
            <person name="Shimizu F."/>
            <person name="Wakebe H."/>
            <person name="Hishigaki H."/>
            <person name="Watanabe T."/>
            <person name="Sugiyama A."/>
            <person name="Takemoto M."/>
            <person name="Kawakami B."/>
            <person name="Yamazaki M."/>
            <person name="Watanabe K."/>
            <person name="Kumagai A."/>
            <person name="Itakura S."/>
            <person name="Fukuzumi Y."/>
            <person name="Fujimori Y."/>
            <person name="Komiyama M."/>
            <person name="Tashiro H."/>
            <person name="Tanigami A."/>
            <person name="Fujiwara T."/>
            <person name="Ono T."/>
            <person name="Yamada K."/>
            <person name="Fujii Y."/>
            <person name="Ozaki K."/>
            <person name="Hirao M."/>
            <person name="Ohmori Y."/>
            <person name="Kawabata A."/>
            <person name="Hikiji T."/>
            <person name="Kobatake N."/>
            <person name="Inagaki H."/>
            <person name="Ikema Y."/>
            <person name="Okamoto S."/>
            <person name="Okitani R."/>
            <person name="Kawakami T."/>
            <person name="Noguchi S."/>
            <person name="Itoh T."/>
            <person name="Shigeta K."/>
            <person name="Senba T."/>
            <person name="Matsumura K."/>
            <person name="Nakajima Y."/>
            <person name="Mizuno T."/>
            <person name="Morinaga M."/>
            <person name="Sasaki M."/>
            <person name="Togashi T."/>
            <person name="Oyama M."/>
            <person name="Hata H."/>
            <person name="Watanabe M."/>
            <person name="Komatsu T."/>
            <person name="Mizushima-Sugano J."/>
            <person name="Satoh T."/>
            <person name="Shirai Y."/>
            <person name="Takahashi Y."/>
            <person name="Nakagawa K."/>
            <person name="Okumura K."/>
            <person name="Nagase T."/>
            <person name="Nomura N."/>
            <person name="Kikuchi H."/>
            <person name="Masuho Y."/>
            <person name="Yamashita R."/>
            <person name="Nakai K."/>
            <person name="Yada T."/>
            <person name="Nakamura Y."/>
            <person name="Ohara O."/>
            <person name="Isogai T."/>
            <person name="Sugano S."/>
        </authorList>
    </citation>
    <scope>NUCLEOTIDE SEQUENCE [LARGE SCALE MRNA] (ISOFORM LIMK2A)</scope>
    <source>
        <tissue>Placenta</tissue>
    </source>
</reference>
<reference key="6">
    <citation type="journal article" date="1999" name="Nature">
        <title>The DNA sequence of human chromosome 22.</title>
        <authorList>
            <person name="Dunham I."/>
            <person name="Hunt A.R."/>
            <person name="Collins J.E."/>
            <person name="Bruskiewich R."/>
            <person name="Beare D.M."/>
            <person name="Clamp M."/>
            <person name="Smink L.J."/>
            <person name="Ainscough R."/>
            <person name="Almeida J.P."/>
            <person name="Babbage A.K."/>
            <person name="Bagguley C."/>
            <person name="Bailey J."/>
            <person name="Barlow K.F."/>
            <person name="Bates K.N."/>
            <person name="Beasley O.P."/>
            <person name="Bird C.P."/>
            <person name="Blakey S.E."/>
            <person name="Bridgeman A.M."/>
            <person name="Buck D."/>
            <person name="Burgess J."/>
            <person name="Burrill W.D."/>
            <person name="Burton J."/>
            <person name="Carder C."/>
            <person name="Carter N.P."/>
            <person name="Chen Y."/>
            <person name="Clark G."/>
            <person name="Clegg S.M."/>
            <person name="Cobley V.E."/>
            <person name="Cole C.G."/>
            <person name="Collier R.E."/>
            <person name="Connor R."/>
            <person name="Conroy D."/>
            <person name="Corby N.R."/>
            <person name="Coville G.J."/>
            <person name="Cox A.V."/>
            <person name="Davis J."/>
            <person name="Dawson E."/>
            <person name="Dhami P.D."/>
            <person name="Dockree C."/>
            <person name="Dodsworth S.J."/>
            <person name="Durbin R.M."/>
            <person name="Ellington A.G."/>
            <person name="Evans K.L."/>
            <person name="Fey J.M."/>
            <person name="Fleming K."/>
            <person name="French L."/>
            <person name="Garner A.A."/>
            <person name="Gilbert J.G.R."/>
            <person name="Goward M.E."/>
            <person name="Grafham D.V."/>
            <person name="Griffiths M.N.D."/>
            <person name="Hall C."/>
            <person name="Hall R.E."/>
            <person name="Hall-Tamlyn G."/>
            <person name="Heathcott R.W."/>
            <person name="Ho S."/>
            <person name="Holmes S."/>
            <person name="Hunt S.E."/>
            <person name="Jones M.C."/>
            <person name="Kershaw J."/>
            <person name="Kimberley A.M."/>
            <person name="King A."/>
            <person name="Laird G.K."/>
            <person name="Langford C.F."/>
            <person name="Leversha M.A."/>
            <person name="Lloyd C."/>
            <person name="Lloyd D.M."/>
            <person name="Martyn I.D."/>
            <person name="Mashreghi-Mohammadi M."/>
            <person name="Matthews L.H."/>
            <person name="Mccann O.T."/>
            <person name="Mcclay J."/>
            <person name="Mclaren S."/>
            <person name="McMurray A.A."/>
            <person name="Milne S.A."/>
            <person name="Mortimore B.J."/>
            <person name="Odell C.N."/>
            <person name="Pavitt R."/>
            <person name="Pearce A.V."/>
            <person name="Pearson D."/>
            <person name="Phillimore B.J.C.T."/>
            <person name="Phillips S.H."/>
            <person name="Plumb R.W."/>
            <person name="Ramsay H."/>
            <person name="Ramsey Y."/>
            <person name="Rogers L."/>
            <person name="Ross M.T."/>
            <person name="Scott C.E."/>
            <person name="Sehra H.K."/>
            <person name="Skuce C.D."/>
            <person name="Smalley S."/>
            <person name="Smith M.L."/>
            <person name="Soderlund C."/>
            <person name="Spragon L."/>
            <person name="Steward C.A."/>
            <person name="Sulston J.E."/>
            <person name="Swann R.M."/>
            <person name="Vaudin M."/>
            <person name="Wall M."/>
            <person name="Wallis J.M."/>
            <person name="Whiteley M.N."/>
            <person name="Willey D.L."/>
            <person name="Williams L."/>
            <person name="Williams S.A."/>
            <person name="Williamson H."/>
            <person name="Wilmer T.E."/>
            <person name="Wilming L."/>
            <person name="Wright C.L."/>
            <person name="Hubbard T."/>
            <person name="Bentley D.R."/>
            <person name="Beck S."/>
            <person name="Rogers J."/>
            <person name="Shimizu N."/>
            <person name="Minoshima S."/>
            <person name="Kawasaki K."/>
            <person name="Sasaki T."/>
            <person name="Asakawa S."/>
            <person name="Kudoh J."/>
            <person name="Shintani A."/>
            <person name="Shibuya K."/>
            <person name="Yoshizaki Y."/>
            <person name="Aoki N."/>
            <person name="Mitsuyama S."/>
            <person name="Roe B.A."/>
            <person name="Chen F."/>
            <person name="Chu L."/>
            <person name="Crabtree J."/>
            <person name="Deschamps S."/>
            <person name="Do A."/>
            <person name="Do T."/>
            <person name="Dorman A."/>
            <person name="Fang F."/>
            <person name="Fu Y."/>
            <person name="Hu P."/>
            <person name="Hua A."/>
            <person name="Kenton S."/>
            <person name="Lai H."/>
            <person name="Lao H.I."/>
            <person name="Lewis J."/>
            <person name="Lewis S."/>
            <person name="Lin S.-P."/>
            <person name="Loh P."/>
            <person name="Malaj E."/>
            <person name="Nguyen T."/>
            <person name="Pan H."/>
            <person name="Phan S."/>
            <person name="Qi S."/>
            <person name="Qian Y."/>
            <person name="Ray L."/>
            <person name="Ren Q."/>
            <person name="Shaull S."/>
            <person name="Sloan D."/>
            <person name="Song L."/>
            <person name="Wang Q."/>
            <person name="Wang Y."/>
            <person name="Wang Z."/>
            <person name="White J."/>
            <person name="Willingham D."/>
            <person name="Wu H."/>
            <person name="Yao Z."/>
            <person name="Zhan M."/>
            <person name="Zhang G."/>
            <person name="Chissoe S."/>
            <person name="Murray J."/>
            <person name="Miller N."/>
            <person name="Minx P."/>
            <person name="Fulton R."/>
            <person name="Johnson D."/>
            <person name="Bemis G."/>
            <person name="Bentley D."/>
            <person name="Bradshaw H."/>
            <person name="Bourne S."/>
            <person name="Cordes M."/>
            <person name="Du Z."/>
            <person name="Fulton L."/>
            <person name="Goela D."/>
            <person name="Graves T."/>
            <person name="Hawkins J."/>
            <person name="Hinds K."/>
            <person name="Kemp K."/>
            <person name="Latreille P."/>
            <person name="Layman D."/>
            <person name="Ozersky P."/>
            <person name="Rohlfing T."/>
            <person name="Scheet P."/>
            <person name="Walker C."/>
            <person name="Wamsley A."/>
            <person name="Wohldmann P."/>
            <person name="Pepin K."/>
            <person name="Nelson J."/>
            <person name="Korf I."/>
            <person name="Bedell J.A."/>
            <person name="Hillier L.W."/>
            <person name="Mardis E."/>
            <person name="Waterston R."/>
            <person name="Wilson R."/>
            <person name="Emanuel B.S."/>
            <person name="Shaikh T."/>
            <person name="Kurahashi H."/>
            <person name="Saitta S."/>
            <person name="Budarf M.L."/>
            <person name="McDermid H.E."/>
            <person name="Johnson A."/>
            <person name="Wong A.C.C."/>
            <person name="Morrow B.E."/>
            <person name="Edelmann L."/>
            <person name="Kim U.J."/>
            <person name="Shizuya H."/>
            <person name="Simon M.I."/>
            <person name="Dumanski J.P."/>
            <person name="Peyrard M."/>
            <person name="Kedra D."/>
            <person name="Seroussi E."/>
            <person name="Fransson I."/>
            <person name="Tapia I."/>
            <person name="Bruder C.E."/>
            <person name="O'Brien K.P."/>
            <person name="Wilkinson P."/>
            <person name="Bodenteich A."/>
            <person name="Hartman K."/>
            <person name="Hu X."/>
            <person name="Khan A.S."/>
            <person name="Lane L."/>
            <person name="Tilahun Y."/>
            <person name="Wright H."/>
        </authorList>
    </citation>
    <scope>NUCLEOTIDE SEQUENCE [LARGE SCALE GENOMIC DNA]</scope>
</reference>
<reference key="7">
    <citation type="submission" date="2005-07" db="EMBL/GenBank/DDBJ databases">
        <authorList>
            <person name="Mural R.J."/>
            <person name="Istrail S."/>
            <person name="Sutton G.G."/>
            <person name="Florea L."/>
            <person name="Halpern A.L."/>
            <person name="Mobarry C.M."/>
            <person name="Lippert R."/>
            <person name="Walenz B."/>
            <person name="Shatkay H."/>
            <person name="Dew I."/>
            <person name="Miller J.R."/>
            <person name="Flanigan M.J."/>
            <person name="Edwards N.J."/>
            <person name="Bolanos R."/>
            <person name="Fasulo D."/>
            <person name="Halldorsson B.V."/>
            <person name="Hannenhalli S."/>
            <person name="Turner R."/>
            <person name="Yooseph S."/>
            <person name="Lu F."/>
            <person name="Nusskern D.R."/>
            <person name="Shue B.C."/>
            <person name="Zheng X.H."/>
            <person name="Zhong F."/>
            <person name="Delcher A.L."/>
            <person name="Huson D.H."/>
            <person name="Kravitz S.A."/>
            <person name="Mouchard L."/>
            <person name="Reinert K."/>
            <person name="Remington K.A."/>
            <person name="Clark A.G."/>
            <person name="Waterman M.S."/>
            <person name="Eichler E.E."/>
            <person name="Adams M.D."/>
            <person name="Hunkapiller M.W."/>
            <person name="Myers E.W."/>
            <person name="Venter J.C."/>
        </authorList>
    </citation>
    <scope>NUCLEOTIDE SEQUENCE [LARGE SCALE GENOMIC DNA]</scope>
</reference>
<reference key="8">
    <citation type="journal article" date="2004" name="Genome Res.">
        <title>The status, quality, and expansion of the NIH full-length cDNA project: the Mammalian Gene Collection (MGC).</title>
        <authorList>
            <consortium name="The MGC Project Team"/>
        </authorList>
    </citation>
    <scope>NUCLEOTIDE SEQUENCE [LARGE SCALE MRNA] (ISOFORM 3)</scope>
    <source>
        <tissue>Ovary</tissue>
    </source>
</reference>
<reference key="9">
    <citation type="submission" date="1998-03" db="EMBL/GenBank/DDBJ databases">
        <title>Molecular cloning and characterization of novel large protein, limkain b1, which associates with the LIM-kinase 2.</title>
        <authorList>
            <person name="Miyamoto K."/>
            <person name="Nakamura T."/>
            <person name="Shirakawa K."/>
            <person name="Matsumoto K."/>
        </authorList>
    </citation>
    <scope>INTERACTION WITH MARF1</scope>
</reference>
<reference key="10">
    <citation type="journal article" date="1999" name="Science">
        <title>Signaling from Rho to the actin cytoskeleton through protein kinases ROCK and LIM-kinase.</title>
        <authorList>
            <person name="Maekawa M."/>
            <person name="Ishizaki T."/>
            <person name="Boku S."/>
            <person name="Watanabe N."/>
            <person name="Fujita A."/>
            <person name="Iwamatsu A."/>
            <person name="Obinata T."/>
            <person name="Ohashi K."/>
            <person name="Mizuno K."/>
            <person name="Narumiya S."/>
        </authorList>
    </citation>
    <scope>FUNCTION</scope>
    <scope>INTERACTION WITH ROCK1</scope>
</reference>
<reference key="11">
    <citation type="journal article" date="2001" name="J. Biol. Chem.">
        <title>Specific activation of LIM kinase 2 via phosphorylation of threonine 505 by ROCK, a Rho-dependent protein kinase.</title>
        <authorList>
            <person name="Sumi T."/>
            <person name="Matsumoto K."/>
            <person name="Nakamura T."/>
        </authorList>
    </citation>
    <scope>PHOSPHORYLATION AT THR-505</scope>
    <scope>MUTAGENESIS OF THR-505</scope>
    <scope>FUNCTION</scope>
    <scope>INTERACTION WITH ROCK1</scope>
</reference>
<reference key="12">
    <citation type="journal article" date="2001" name="J. Biol. Chem.">
        <title>Activation of LIM kinases by myotonic dystrophy kinase-related Cdc42-binding kinase alpha.</title>
        <authorList>
            <person name="Sumi T."/>
            <person name="Matsumoto K."/>
            <person name="Shibuya A."/>
            <person name="Nakamura T."/>
        </authorList>
    </citation>
    <scope>PHOSPHORYLATION AT THR-505 BY CDC42BP</scope>
</reference>
<reference key="13">
    <citation type="journal article" date="2008" name="Mol. Cell">
        <title>Kinase-selective enrichment enables quantitative phosphoproteomics of the kinome across the cell cycle.</title>
        <authorList>
            <person name="Daub H."/>
            <person name="Olsen J.V."/>
            <person name="Bairlein M."/>
            <person name="Gnad F."/>
            <person name="Oppermann F.S."/>
            <person name="Korner R."/>
            <person name="Greff Z."/>
            <person name="Keri G."/>
            <person name="Stemmann O."/>
            <person name="Mann M."/>
        </authorList>
    </citation>
    <scope>PHOSPHORYLATION [LARGE SCALE ANALYSIS] AT THR-210 AND SER-293</scope>
    <scope>IDENTIFICATION BY MASS SPECTROMETRY [LARGE SCALE ANALYSIS]</scope>
    <source>
        <tissue>Cervix carcinoma</tissue>
    </source>
</reference>
<reference key="14">
    <citation type="journal article" date="2008" name="Proc. Natl. Acad. Sci. U.S.A.">
        <title>A quantitative atlas of mitotic phosphorylation.</title>
        <authorList>
            <person name="Dephoure N."/>
            <person name="Zhou C."/>
            <person name="Villen J."/>
            <person name="Beausoleil S.A."/>
            <person name="Bakalarski C.E."/>
            <person name="Elledge S.J."/>
            <person name="Gygi S.P."/>
        </authorList>
    </citation>
    <scope>PHOSPHORYLATION [LARGE SCALE ANALYSIS] AT SER-293 AND SER-298</scope>
    <scope>IDENTIFICATION BY MASS SPECTROMETRY [LARGE SCALE ANALYSIS]</scope>
    <source>
        <tissue>Cervix carcinoma</tissue>
    </source>
</reference>
<reference key="15">
    <citation type="journal article" date="2009" name="Mol. Cell. Proteomics">
        <title>Large-scale proteomics analysis of the human kinome.</title>
        <authorList>
            <person name="Oppermann F.S."/>
            <person name="Gnad F."/>
            <person name="Olsen J.V."/>
            <person name="Hornberger R."/>
            <person name="Greff Z."/>
            <person name="Keri G."/>
            <person name="Mann M."/>
            <person name="Daub H."/>
        </authorList>
    </citation>
    <scope>IDENTIFICATION BY MASS SPECTROMETRY [LARGE SCALE ANALYSIS]</scope>
</reference>
<reference key="16">
    <citation type="journal article" date="2012" name="J. Cell Sci.">
        <title>TPPP acts downstream of RhoA-ROCK-LIMK2 to regulate astral microtubule organization and spindle orientation.</title>
        <authorList>
            <person name="Heng Y.W."/>
            <person name="Lim H.H."/>
            <person name="Mina T."/>
            <person name="Utomo P."/>
            <person name="Zhong S."/>
            <person name="Lim C.T."/>
            <person name="Koh C.G."/>
        </authorList>
    </citation>
    <scope>FUNCTION</scope>
    <scope>CATALYTIC ACTIVITY</scope>
    <scope>SUBCELLULAR LOCATION</scope>
    <scope>MUTAGENESIS OF ASP-451 AND THR-505</scope>
    <scope>ACTIVE SITE</scope>
</reference>
<reference key="17">
    <citation type="journal article" date="2013" name="J. Proteome Res.">
        <title>Toward a comprehensive characterization of a human cancer cell phosphoproteome.</title>
        <authorList>
            <person name="Zhou H."/>
            <person name="Di Palma S."/>
            <person name="Preisinger C."/>
            <person name="Peng M."/>
            <person name="Polat A.N."/>
            <person name="Heck A.J."/>
            <person name="Mohammed S."/>
        </authorList>
    </citation>
    <scope>PHOSPHORYLATION [LARGE SCALE ANALYSIS] AT SER-298</scope>
    <scope>IDENTIFICATION BY MASS SPECTROMETRY [LARGE SCALE ANALYSIS]</scope>
    <source>
        <tissue>Erythroleukemia</tissue>
    </source>
</reference>
<reference key="18">
    <citation type="journal article" date="2015" name="Nat. Commun.">
        <title>Actin remodelling factors control ciliogenesis by regulating YAP/TAZ activity and vesicle trafficking.</title>
        <authorList>
            <person name="Kim J."/>
            <person name="Jo H."/>
            <person name="Hong H."/>
            <person name="Kim M.H."/>
            <person name="Kim J.M."/>
            <person name="Lee J.K."/>
            <person name="Heo W.D."/>
            <person name="Kim J."/>
        </authorList>
    </citation>
    <scope>FUNCTION</scope>
    <scope>SUBCELLULAR LOCATION</scope>
</reference>
<reference key="19">
    <citation type="submission" date="2005-11" db="PDB data bank">
        <title>Solution structures of the second LIM domain of human LIM-kinase 2 (LIMK2).</title>
        <authorList>
            <consortium name="RIKEN structural genomics initiative (RSGI)"/>
        </authorList>
    </citation>
    <scope>STRUCTURE BY NMR OF 62-129</scope>
</reference>
<reference key="20">
    <citation type="journal article" date="2007" name="Nature">
        <title>Patterns of somatic mutation in human cancer genomes.</title>
        <authorList>
            <person name="Greenman C."/>
            <person name="Stephens P."/>
            <person name="Smith R."/>
            <person name="Dalgliesh G.L."/>
            <person name="Hunter C."/>
            <person name="Bignell G."/>
            <person name="Davies H."/>
            <person name="Teague J."/>
            <person name="Butler A."/>
            <person name="Stevens C."/>
            <person name="Edkins S."/>
            <person name="O'Meara S."/>
            <person name="Vastrik I."/>
            <person name="Schmidt E.E."/>
            <person name="Avis T."/>
            <person name="Barthorpe S."/>
            <person name="Bhamra G."/>
            <person name="Buck G."/>
            <person name="Choudhury B."/>
            <person name="Clements J."/>
            <person name="Cole J."/>
            <person name="Dicks E."/>
            <person name="Forbes S."/>
            <person name="Gray K."/>
            <person name="Halliday K."/>
            <person name="Harrison R."/>
            <person name="Hills K."/>
            <person name="Hinton J."/>
            <person name="Jenkinson A."/>
            <person name="Jones D."/>
            <person name="Menzies A."/>
            <person name="Mironenko T."/>
            <person name="Perry J."/>
            <person name="Raine K."/>
            <person name="Richardson D."/>
            <person name="Shepherd R."/>
            <person name="Small A."/>
            <person name="Tofts C."/>
            <person name="Varian J."/>
            <person name="Webb T."/>
            <person name="West S."/>
            <person name="Widaa S."/>
            <person name="Yates A."/>
            <person name="Cahill D.P."/>
            <person name="Louis D.N."/>
            <person name="Goldstraw P."/>
            <person name="Nicholson A.G."/>
            <person name="Brasseur F."/>
            <person name="Looijenga L."/>
            <person name="Weber B.L."/>
            <person name="Chiew Y.-E."/>
            <person name="DeFazio A."/>
            <person name="Greaves M.F."/>
            <person name="Green A.R."/>
            <person name="Campbell P."/>
            <person name="Birney E."/>
            <person name="Easton D.F."/>
            <person name="Chenevix-Trench G."/>
            <person name="Tan M.-H."/>
            <person name="Khoo S.K."/>
            <person name="Teh B.T."/>
            <person name="Yuen S.T."/>
            <person name="Leung S.Y."/>
            <person name="Wooster R."/>
            <person name="Futreal P.A."/>
            <person name="Stratton M.R."/>
        </authorList>
    </citation>
    <scope>VARIANTS [LARGE SCALE ANALYSIS] SER-35; ASN-45; CYS-213; ARG-296 AND CYS-418</scope>
</reference>